<accession>Q2Y6F9</accession>
<dbReference type="EMBL" id="CP000103">
    <property type="protein sequence ID" value="ABB75662.1"/>
    <property type="molecule type" value="Genomic_DNA"/>
</dbReference>
<dbReference type="RefSeq" id="WP_011381663.1">
    <property type="nucleotide sequence ID" value="NC_007614.1"/>
</dbReference>
<dbReference type="SMR" id="Q2Y6F9"/>
<dbReference type="STRING" id="323848.Nmul_A2373"/>
<dbReference type="KEGG" id="nmu:Nmul_A2373"/>
<dbReference type="eggNOG" id="COG1160">
    <property type="taxonomic scope" value="Bacteria"/>
</dbReference>
<dbReference type="HOGENOM" id="CLU_016077_6_2_4"/>
<dbReference type="OrthoDB" id="9805918at2"/>
<dbReference type="Proteomes" id="UP000002718">
    <property type="component" value="Chromosome"/>
</dbReference>
<dbReference type="GO" id="GO:0016887">
    <property type="term" value="F:ATP hydrolysis activity"/>
    <property type="evidence" value="ECO:0007669"/>
    <property type="project" value="InterPro"/>
</dbReference>
<dbReference type="GO" id="GO:0005525">
    <property type="term" value="F:GTP binding"/>
    <property type="evidence" value="ECO:0007669"/>
    <property type="project" value="UniProtKB-UniRule"/>
</dbReference>
<dbReference type="GO" id="GO:0043022">
    <property type="term" value="F:ribosome binding"/>
    <property type="evidence" value="ECO:0007669"/>
    <property type="project" value="TreeGrafter"/>
</dbReference>
<dbReference type="GO" id="GO:0042254">
    <property type="term" value="P:ribosome biogenesis"/>
    <property type="evidence" value="ECO:0007669"/>
    <property type="project" value="UniProtKB-KW"/>
</dbReference>
<dbReference type="CDD" id="cd01894">
    <property type="entry name" value="EngA1"/>
    <property type="match status" value="1"/>
</dbReference>
<dbReference type="CDD" id="cd01895">
    <property type="entry name" value="EngA2"/>
    <property type="match status" value="1"/>
</dbReference>
<dbReference type="FunFam" id="3.30.300.20:FF:000004">
    <property type="entry name" value="GTPase Der"/>
    <property type="match status" value="1"/>
</dbReference>
<dbReference type="FunFam" id="3.40.50.300:FF:000040">
    <property type="entry name" value="GTPase Der"/>
    <property type="match status" value="1"/>
</dbReference>
<dbReference type="FunFam" id="3.40.50.300:FF:000057">
    <property type="entry name" value="GTPase Der"/>
    <property type="match status" value="1"/>
</dbReference>
<dbReference type="Gene3D" id="3.30.300.20">
    <property type="match status" value="1"/>
</dbReference>
<dbReference type="Gene3D" id="3.40.50.300">
    <property type="entry name" value="P-loop containing nucleotide triphosphate hydrolases"/>
    <property type="match status" value="2"/>
</dbReference>
<dbReference type="HAMAP" id="MF_00195">
    <property type="entry name" value="GTPase_Der"/>
    <property type="match status" value="1"/>
</dbReference>
<dbReference type="InterPro" id="IPR003593">
    <property type="entry name" value="AAA+_ATPase"/>
</dbReference>
<dbReference type="InterPro" id="IPR031166">
    <property type="entry name" value="G_ENGA"/>
</dbReference>
<dbReference type="InterPro" id="IPR006073">
    <property type="entry name" value="GTP-bd"/>
</dbReference>
<dbReference type="InterPro" id="IPR016484">
    <property type="entry name" value="GTPase_Der"/>
</dbReference>
<dbReference type="InterPro" id="IPR032859">
    <property type="entry name" value="KH_dom-like"/>
</dbReference>
<dbReference type="InterPro" id="IPR015946">
    <property type="entry name" value="KH_dom-like_a/b"/>
</dbReference>
<dbReference type="InterPro" id="IPR027417">
    <property type="entry name" value="P-loop_NTPase"/>
</dbReference>
<dbReference type="InterPro" id="IPR005225">
    <property type="entry name" value="Small_GTP-bd"/>
</dbReference>
<dbReference type="NCBIfam" id="TIGR03594">
    <property type="entry name" value="GTPase_EngA"/>
    <property type="match status" value="1"/>
</dbReference>
<dbReference type="NCBIfam" id="TIGR00231">
    <property type="entry name" value="small_GTP"/>
    <property type="match status" value="2"/>
</dbReference>
<dbReference type="PANTHER" id="PTHR43834">
    <property type="entry name" value="GTPASE DER"/>
    <property type="match status" value="1"/>
</dbReference>
<dbReference type="PANTHER" id="PTHR43834:SF6">
    <property type="entry name" value="GTPASE DER"/>
    <property type="match status" value="1"/>
</dbReference>
<dbReference type="Pfam" id="PF14714">
    <property type="entry name" value="KH_dom-like"/>
    <property type="match status" value="1"/>
</dbReference>
<dbReference type="Pfam" id="PF01926">
    <property type="entry name" value="MMR_HSR1"/>
    <property type="match status" value="2"/>
</dbReference>
<dbReference type="PIRSF" id="PIRSF006485">
    <property type="entry name" value="GTP-binding_EngA"/>
    <property type="match status" value="1"/>
</dbReference>
<dbReference type="PRINTS" id="PR00326">
    <property type="entry name" value="GTP1OBG"/>
</dbReference>
<dbReference type="SMART" id="SM00382">
    <property type="entry name" value="AAA"/>
    <property type="match status" value="2"/>
</dbReference>
<dbReference type="SUPFAM" id="SSF52540">
    <property type="entry name" value="P-loop containing nucleoside triphosphate hydrolases"/>
    <property type="match status" value="2"/>
</dbReference>
<dbReference type="PROSITE" id="PS51712">
    <property type="entry name" value="G_ENGA"/>
    <property type="match status" value="2"/>
</dbReference>
<sequence>MKPTLVLVGRSNVGKSTLFNRLTRSRDALVADLPGLTRDRHYGHGKLGDRPYLVVDTGGFEPMATEGILHEMAKQTLQAIDEADVVLFIVDGRSGLTAQDKIVAEQLRRSGRRTLLAVNKTEGMAVSVVTAEFHELGLGEPCAISAAHGDNVNELVTLALQDFPDEPEQERKDDHPKIAIVGRPNVGKSTLVNTLLGEERVIAFDQPGTTRDSIYIDFERNGRTYTLIDTAGLRRRGKVQETVEKFSVVKTLQAIEDANVVILVLDAASEISDQDAHIGGFILEAGRALVLAVNKWDSLDEYQRDMIKRDINRKLPFLQNFARFHYISALHGTGTKGLLPSVDAAYGAAMAHLPTPRLTRTLLAAVEKQPPPRAGMSRPKLRYAHQGGSNPPLIIIHGSALNAVPQTYQRYLENTFRDTFGLEGTPLRIEFRTGRNPYAGKSPAPLTEAEAKRAHRRRRYGRKKYG</sequence>
<protein>
    <recommendedName>
        <fullName evidence="1">GTPase Der</fullName>
    </recommendedName>
    <alternativeName>
        <fullName evidence="1">GTP-binding protein EngA</fullName>
    </alternativeName>
</protein>
<proteinExistence type="inferred from homology"/>
<feature type="chain" id="PRO_1000011678" description="GTPase Der">
    <location>
        <begin position="1"/>
        <end position="466"/>
    </location>
</feature>
<feature type="domain" description="EngA-type G 1">
    <location>
        <begin position="3"/>
        <end position="167"/>
    </location>
</feature>
<feature type="domain" description="EngA-type G 2">
    <location>
        <begin position="176"/>
        <end position="350"/>
    </location>
</feature>
<feature type="domain" description="KH-like" evidence="1">
    <location>
        <begin position="351"/>
        <end position="435"/>
    </location>
</feature>
<feature type="region of interest" description="Disordered" evidence="2">
    <location>
        <begin position="433"/>
        <end position="466"/>
    </location>
</feature>
<feature type="compositionally biased region" description="Basic residues" evidence="2">
    <location>
        <begin position="453"/>
        <end position="466"/>
    </location>
</feature>
<feature type="binding site" evidence="1">
    <location>
        <begin position="9"/>
        <end position="16"/>
    </location>
    <ligand>
        <name>GTP</name>
        <dbReference type="ChEBI" id="CHEBI:37565"/>
        <label>1</label>
    </ligand>
</feature>
<feature type="binding site" evidence="1">
    <location>
        <begin position="56"/>
        <end position="60"/>
    </location>
    <ligand>
        <name>GTP</name>
        <dbReference type="ChEBI" id="CHEBI:37565"/>
        <label>1</label>
    </ligand>
</feature>
<feature type="binding site" evidence="1">
    <location>
        <begin position="119"/>
        <end position="122"/>
    </location>
    <ligand>
        <name>GTP</name>
        <dbReference type="ChEBI" id="CHEBI:37565"/>
        <label>1</label>
    </ligand>
</feature>
<feature type="binding site" evidence="1">
    <location>
        <begin position="182"/>
        <end position="189"/>
    </location>
    <ligand>
        <name>GTP</name>
        <dbReference type="ChEBI" id="CHEBI:37565"/>
        <label>2</label>
    </ligand>
</feature>
<feature type="binding site" evidence="1">
    <location>
        <begin position="229"/>
        <end position="233"/>
    </location>
    <ligand>
        <name>GTP</name>
        <dbReference type="ChEBI" id="CHEBI:37565"/>
        <label>2</label>
    </ligand>
</feature>
<feature type="binding site" evidence="1">
    <location>
        <begin position="294"/>
        <end position="297"/>
    </location>
    <ligand>
        <name>GTP</name>
        <dbReference type="ChEBI" id="CHEBI:37565"/>
        <label>2</label>
    </ligand>
</feature>
<keyword id="KW-0342">GTP-binding</keyword>
<keyword id="KW-0547">Nucleotide-binding</keyword>
<keyword id="KW-1185">Reference proteome</keyword>
<keyword id="KW-0677">Repeat</keyword>
<keyword id="KW-0690">Ribosome biogenesis</keyword>
<evidence type="ECO:0000255" key="1">
    <source>
        <dbReference type="HAMAP-Rule" id="MF_00195"/>
    </source>
</evidence>
<evidence type="ECO:0000256" key="2">
    <source>
        <dbReference type="SAM" id="MobiDB-lite"/>
    </source>
</evidence>
<comment type="function">
    <text evidence="1">GTPase that plays an essential role in the late steps of ribosome biogenesis.</text>
</comment>
<comment type="subunit">
    <text evidence="1">Associates with the 50S ribosomal subunit.</text>
</comment>
<comment type="similarity">
    <text evidence="1">Belongs to the TRAFAC class TrmE-Era-EngA-EngB-Septin-like GTPase superfamily. EngA (Der) GTPase family.</text>
</comment>
<name>DER_NITMU</name>
<gene>
    <name evidence="1" type="primary">der</name>
    <name type="synonym">engA</name>
    <name type="ordered locus">Nmul_A2373</name>
</gene>
<reference key="1">
    <citation type="submission" date="2005-08" db="EMBL/GenBank/DDBJ databases">
        <title>Complete sequence of chromosome 1 of Nitrosospira multiformis ATCC 25196.</title>
        <authorList>
            <person name="Copeland A."/>
            <person name="Lucas S."/>
            <person name="Lapidus A."/>
            <person name="Barry K."/>
            <person name="Detter J.C."/>
            <person name="Glavina T."/>
            <person name="Hammon N."/>
            <person name="Israni S."/>
            <person name="Pitluck S."/>
            <person name="Chain P."/>
            <person name="Malfatti S."/>
            <person name="Shin M."/>
            <person name="Vergez L."/>
            <person name="Schmutz J."/>
            <person name="Larimer F."/>
            <person name="Land M."/>
            <person name="Hauser L."/>
            <person name="Kyrpides N."/>
            <person name="Lykidis A."/>
            <person name="Richardson P."/>
        </authorList>
    </citation>
    <scope>NUCLEOTIDE SEQUENCE [LARGE SCALE GENOMIC DNA]</scope>
    <source>
        <strain>ATCC 25196 / NCIMB 11849 / C 71</strain>
    </source>
</reference>
<organism>
    <name type="scientific">Nitrosospira multiformis (strain ATCC 25196 / NCIMB 11849 / C 71)</name>
    <dbReference type="NCBI Taxonomy" id="323848"/>
    <lineage>
        <taxon>Bacteria</taxon>
        <taxon>Pseudomonadati</taxon>
        <taxon>Pseudomonadota</taxon>
        <taxon>Betaproteobacteria</taxon>
        <taxon>Nitrosomonadales</taxon>
        <taxon>Nitrosomonadaceae</taxon>
        <taxon>Nitrosospira</taxon>
    </lineage>
</organism>